<gene>
    <name type="ordered locus">slr0889</name>
</gene>
<evidence type="ECO:0000305" key="1"/>
<organism>
    <name type="scientific">Synechocystis sp. (strain ATCC 27184 / PCC 6803 / Kazusa)</name>
    <dbReference type="NCBI Taxonomy" id="1111708"/>
    <lineage>
        <taxon>Bacteria</taxon>
        <taxon>Bacillati</taxon>
        <taxon>Cyanobacteriota</taxon>
        <taxon>Cyanophyceae</taxon>
        <taxon>Synechococcales</taxon>
        <taxon>Merismopediaceae</taxon>
        <taxon>Synechocystis</taxon>
    </lineage>
</organism>
<reference key="1">
    <citation type="journal article" date="1996" name="DNA Res.">
        <title>Sequence analysis of the genome of the unicellular cyanobacterium Synechocystis sp. strain PCC6803. II. Sequence determination of the entire genome and assignment of potential protein-coding regions.</title>
        <authorList>
            <person name="Kaneko T."/>
            <person name="Sato S."/>
            <person name="Kotani H."/>
            <person name="Tanaka A."/>
            <person name="Asamizu E."/>
            <person name="Nakamura Y."/>
            <person name="Miyajima N."/>
            <person name="Hirosawa M."/>
            <person name="Sugiura M."/>
            <person name="Sasamoto S."/>
            <person name="Kimura T."/>
            <person name="Hosouchi T."/>
            <person name="Matsuno A."/>
            <person name="Muraki A."/>
            <person name="Nakazaki N."/>
            <person name="Naruo K."/>
            <person name="Okumura S."/>
            <person name="Shimpo S."/>
            <person name="Takeuchi C."/>
            <person name="Wada T."/>
            <person name="Watanabe A."/>
            <person name="Yamada M."/>
            <person name="Yasuda M."/>
            <person name="Tabata S."/>
        </authorList>
    </citation>
    <scope>NUCLEOTIDE SEQUENCE [LARGE SCALE GENOMIC DNA]</scope>
    <source>
        <strain>ATCC 27184 / PCC 6803 / Kazusa</strain>
    </source>
</reference>
<keyword id="KW-1185">Reference proteome</keyword>
<feature type="chain" id="PRO_0000200732" description="Uncharacterized protein slr0889">
    <location>
        <begin position="1"/>
        <end position="408"/>
    </location>
</feature>
<sequence length="408" mass="45957">MFALPQAGDRRGEIIKVLLSNGWDYMNGLLTLGKVGEPQIPTPEVLTKILVELGPFYIKLGQLLSTRPDLLPPRYINALTALQSNVPPLPWSAIEDLLQREFPQPLGETFQEIESEPIAAGSIGQIHRAVLQSGETVAIKVKRPGIDVIVEQDSLLIKDVAELLALTEFGQNYDIVKLADEFTQTVKAELNFDTEAAYTNNLRTNLAKTTWFDPNQLVIPKVYWELTNQKFLVLEWLDGVPILTADLTQPPSDKDIAEKKKEITTLLFRAFFQQLYVDGFFHADPHPGNIFYLADGRLALIDCGMVGRLDPRTRQLLTEMLLAIVDLDAKRCAQLTVELSESVGRVNFQRLEVDYERMLRKYYDLSLSEFNFSEVVYEFLRIARVNKLKVPACLGLYAKCLANLEGAG</sequence>
<accession>P73577</accession>
<proteinExistence type="inferred from homology"/>
<dbReference type="EMBL" id="BA000022">
    <property type="protein sequence ID" value="BAA17617.1"/>
    <property type="molecule type" value="Genomic_DNA"/>
</dbReference>
<dbReference type="PIR" id="S77283">
    <property type="entry name" value="S77283"/>
</dbReference>
<dbReference type="SMR" id="P73577"/>
<dbReference type="IntAct" id="P73577">
    <property type="interactions" value="6"/>
</dbReference>
<dbReference type="STRING" id="1148.gene:10498484"/>
<dbReference type="PaxDb" id="1148-1652697"/>
<dbReference type="EnsemblBacteria" id="BAA17617">
    <property type="protein sequence ID" value="BAA17617"/>
    <property type="gene ID" value="BAA17617"/>
</dbReference>
<dbReference type="KEGG" id="syn:slr0889"/>
<dbReference type="eggNOG" id="COG0661">
    <property type="taxonomic scope" value="Bacteria"/>
</dbReference>
<dbReference type="InParanoid" id="P73577"/>
<dbReference type="PhylomeDB" id="P73577"/>
<dbReference type="Proteomes" id="UP000001425">
    <property type="component" value="Chromosome"/>
</dbReference>
<dbReference type="GO" id="GO:0005524">
    <property type="term" value="F:ATP binding"/>
    <property type="evidence" value="ECO:0007669"/>
    <property type="project" value="InterPro"/>
</dbReference>
<dbReference type="GO" id="GO:0004672">
    <property type="term" value="F:protein kinase activity"/>
    <property type="evidence" value="ECO:0007669"/>
    <property type="project" value="InterPro"/>
</dbReference>
<dbReference type="CDD" id="cd05121">
    <property type="entry name" value="ABC1_ADCK3-like"/>
    <property type="match status" value="1"/>
</dbReference>
<dbReference type="InterPro" id="IPR004147">
    <property type="entry name" value="ABC1_dom"/>
</dbReference>
<dbReference type="InterPro" id="IPR011009">
    <property type="entry name" value="Kinase-like_dom_sf"/>
</dbReference>
<dbReference type="InterPro" id="IPR000719">
    <property type="entry name" value="Prot_kinase_dom"/>
</dbReference>
<dbReference type="InterPro" id="IPR050154">
    <property type="entry name" value="UbiB_kinase"/>
</dbReference>
<dbReference type="PANTHER" id="PTHR10566">
    <property type="entry name" value="CHAPERONE-ACTIVITY OF BC1 COMPLEX CABC1 -RELATED"/>
    <property type="match status" value="1"/>
</dbReference>
<dbReference type="PANTHER" id="PTHR10566:SF113">
    <property type="entry name" value="PROTEIN ACTIVITY OF BC1 COMPLEX KINASE 7, CHLOROPLASTIC"/>
    <property type="match status" value="1"/>
</dbReference>
<dbReference type="Pfam" id="PF03109">
    <property type="entry name" value="ABC1"/>
    <property type="match status" value="1"/>
</dbReference>
<dbReference type="SUPFAM" id="SSF56112">
    <property type="entry name" value="Protein kinase-like (PK-like)"/>
    <property type="match status" value="1"/>
</dbReference>
<comment type="similarity">
    <text evidence="1">Belongs to the protein kinase superfamily. ADCK protein kinase family.</text>
</comment>
<name>Y889_SYNY3</name>
<protein>
    <recommendedName>
        <fullName>Uncharacterized protein slr0889</fullName>
    </recommendedName>
</protein>